<evidence type="ECO:0000305" key="1"/>
<accession>Q6GVM5</accession>
<gene>
    <name type="primary">TXLNGY</name>
</gene>
<proteinExistence type="evidence at transcript level"/>
<comment type="similarity">
    <text evidence="1">Belongs to the taxilin family.</text>
</comment>
<sequence length="131" mass="14574">MEEAGLCGLRRKADMLCNSESHDILQHQDSNCSATSNKHLLEDEEGSDFITKNRSWVSPVHCTQESRKELPEQEVAPPSGQQALQCNRNKEKVLGKEVLLLMQALNTLLTPEEKLAAVCKKYADLGNSPLL</sequence>
<dbReference type="EMBL" id="AY633113">
    <property type="protein sequence ID" value="AAT46350.1"/>
    <property type="molecule type" value="mRNA"/>
</dbReference>
<dbReference type="RefSeq" id="NP_001009080.1">
    <property type="nucleotide sequence ID" value="NM_001009080.1"/>
</dbReference>
<dbReference type="SMR" id="Q6GVM5"/>
<dbReference type="STRING" id="9598.ENSPTRP00000055050"/>
<dbReference type="PaxDb" id="9598-ENSPTRP00000055050"/>
<dbReference type="GeneID" id="450201"/>
<dbReference type="KEGG" id="ptr:450201"/>
<dbReference type="CTD" id="246126"/>
<dbReference type="eggNOG" id="KOG1850">
    <property type="taxonomic scope" value="Eukaryota"/>
</dbReference>
<dbReference type="HOGENOM" id="CLU_1926929_0_0_1"/>
<dbReference type="InParanoid" id="Q6GVM5"/>
<dbReference type="Proteomes" id="UP000002277">
    <property type="component" value="Unplaced"/>
</dbReference>
<dbReference type="GO" id="GO:0019905">
    <property type="term" value="F:syntaxin binding"/>
    <property type="evidence" value="ECO:0007669"/>
    <property type="project" value="InterPro"/>
</dbReference>
<dbReference type="InterPro" id="IPR026183">
    <property type="entry name" value="Taxilin_fam"/>
</dbReference>
<dbReference type="PANTHER" id="PTHR16127:SF14">
    <property type="entry name" value="GAMMA-TAXILIN"/>
    <property type="match status" value="1"/>
</dbReference>
<dbReference type="PANTHER" id="PTHR16127">
    <property type="entry name" value="TAXILIN"/>
    <property type="match status" value="1"/>
</dbReference>
<name>TXNG2_PANTR</name>
<keyword id="KW-1185">Reference proteome</keyword>
<protein>
    <recommendedName>
        <fullName>Putative gamma-taxilin 2</fullName>
    </recommendedName>
</protein>
<organism>
    <name type="scientific">Pan troglodytes</name>
    <name type="common">Chimpanzee</name>
    <dbReference type="NCBI Taxonomy" id="9598"/>
    <lineage>
        <taxon>Eukaryota</taxon>
        <taxon>Metazoa</taxon>
        <taxon>Chordata</taxon>
        <taxon>Craniata</taxon>
        <taxon>Vertebrata</taxon>
        <taxon>Euteleostomi</taxon>
        <taxon>Mammalia</taxon>
        <taxon>Eutheria</taxon>
        <taxon>Euarchontoglires</taxon>
        <taxon>Primates</taxon>
        <taxon>Haplorrhini</taxon>
        <taxon>Catarrhini</taxon>
        <taxon>Hominidae</taxon>
        <taxon>Pan</taxon>
    </lineage>
</organism>
<reference key="1">
    <citation type="submission" date="2004-07" db="EMBL/GenBank/DDBJ databases">
        <title>The DNA sequence of the chimpanzee Y chromosome.</title>
        <authorList>
            <person name="Hughes J.F."/>
            <person name="Pyntikova T."/>
            <person name="Skaletsky H."/>
            <person name="Minx P.J."/>
            <person name="Rozen S."/>
            <person name="Wilson R.K."/>
            <person name="Page D.C."/>
        </authorList>
    </citation>
    <scope>NUCLEOTIDE SEQUENCE [LARGE SCALE GENOMIC DNA]</scope>
</reference>
<feature type="chain" id="PRO_0000189429" description="Putative gamma-taxilin 2">
    <location>
        <begin position="1"/>
        <end position="131"/>
    </location>
</feature>